<name>HUNB_PLADU</name>
<comment type="function">
    <text>Gap class segmentation protein that controls development of head structures.</text>
</comment>
<comment type="subcellular location">
    <subcellularLocation>
        <location evidence="2">Nucleus</location>
    </subcellularLocation>
</comment>
<comment type="similarity">
    <text evidence="2">Belongs to the hunchback C2H2-type zinc-finger protein family.</text>
</comment>
<dbReference type="EMBL" id="L01607">
    <property type="protein sequence ID" value="AAA29792.1"/>
    <property type="molecule type" value="Genomic_DNA"/>
</dbReference>
<dbReference type="SMR" id="Q01789"/>
<dbReference type="GO" id="GO:0005634">
    <property type="term" value="C:nucleus"/>
    <property type="evidence" value="ECO:0007669"/>
    <property type="project" value="UniProtKB-SubCell"/>
</dbReference>
<dbReference type="GO" id="GO:0003677">
    <property type="term" value="F:DNA binding"/>
    <property type="evidence" value="ECO:0007669"/>
    <property type="project" value="UniProtKB-KW"/>
</dbReference>
<dbReference type="GO" id="GO:0008270">
    <property type="term" value="F:zinc ion binding"/>
    <property type="evidence" value="ECO:0007669"/>
    <property type="project" value="UniProtKB-KW"/>
</dbReference>
<dbReference type="GO" id="GO:0010468">
    <property type="term" value="P:regulation of gene expression"/>
    <property type="evidence" value="ECO:0007669"/>
    <property type="project" value="UniProtKB-ARBA"/>
</dbReference>
<dbReference type="GO" id="GO:0035282">
    <property type="term" value="P:segmentation"/>
    <property type="evidence" value="ECO:0007669"/>
    <property type="project" value="UniProtKB-KW"/>
</dbReference>
<dbReference type="FunFam" id="3.30.160.60:FF:000614">
    <property type="entry name" value="Zinc finger protein 142"/>
    <property type="match status" value="1"/>
</dbReference>
<dbReference type="Gene3D" id="3.30.160.60">
    <property type="entry name" value="Classic Zinc Finger"/>
    <property type="match status" value="1"/>
</dbReference>
<dbReference type="InterPro" id="IPR056438">
    <property type="entry name" value="Znf-C2H2_CTCF"/>
</dbReference>
<dbReference type="InterPro" id="IPR036236">
    <property type="entry name" value="Znf_C2H2_sf"/>
</dbReference>
<dbReference type="InterPro" id="IPR013087">
    <property type="entry name" value="Znf_C2H2_type"/>
</dbReference>
<dbReference type="PANTHER" id="PTHR24392:SF49">
    <property type="entry name" value="PROTEIN HUNCHBACK"/>
    <property type="match status" value="1"/>
</dbReference>
<dbReference type="PANTHER" id="PTHR24392">
    <property type="entry name" value="ZINC FINGER PROTEIN"/>
    <property type="match status" value="1"/>
</dbReference>
<dbReference type="Pfam" id="PF23611">
    <property type="entry name" value="zf-C2H2_16"/>
    <property type="match status" value="1"/>
</dbReference>
<dbReference type="SMART" id="SM00355">
    <property type="entry name" value="ZnF_C2H2"/>
    <property type="match status" value="1"/>
</dbReference>
<dbReference type="SUPFAM" id="SSF57667">
    <property type="entry name" value="beta-beta-alpha zinc fingers"/>
    <property type="match status" value="1"/>
</dbReference>
<dbReference type="PROSITE" id="PS00028">
    <property type="entry name" value="ZINC_FINGER_C2H2_1"/>
    <property type="match status" value="1"/>
</dbReference>
<dbReference type="PROSITE" id="PS50157">
    <property type="entry name" value="ZINC_FINGER_C2H2_2"/>
    <property type="match status" value="1"/>
</dbReference>
<sequence length="50" mass="5908">HLRNHFGSKPFKCNKCNYACVNKSMLNSHMKSHTNVYQYRCADCTYATKY</sequence>
<gene>
    <name type="primary">hb</name>
</gene>
<organism>
    <name type="scientific">Platynereis dumerilii</name>
    <name type="common">Dumeril's clam worm</name>
    <dbReference type="NCBI Taxonomy" id="6359"/>
    <lineage>
        <taxon>Eukaryota</taxon>
        <taxon>Metazoa</taxon>
        <taxon>Spiralia</taxon>
        <taxon>Lophotrochozoa</taxon>
        <taxon>Annelida</taxon>
        <taxon>Polychaeta</taxon>
        <taxon>Errantia</taxon>
        <taxon>Phyllodocida</taxon>
        <taxon>Nereididae</taxon>
        <taxon>Platynereis</taxon>
    </lineage>
</organism>
<keyword id="KW-0217">Developmental protein</keyword>
<keyword id="KW-0238">DNA-binding</keyword>
<keyword id="KW-0302">Gap protein</keyword>
<keyword id="KW-0479">Metal-binding</keyword>
<keyword id="KW-0539">Nucleus</keyword>
<keyword id="KW-0677">Repeat</keyword>
<keyword id="KW-0862">Zinc</keyword>
<keyword id="KW-0863">Zinc-finger</keyword>
<proteinExistence type="inferred from homology"/>
<reference key="1">
    <citation type="journal article" date="1992" name="Proc. Natl. Acad. Sci. U.S.A.">
        <title>Evolutionary conservation pattern of zinc-finger domains of Drosophila segmentation genes.</title>
        <authorList>
            <person name="Sommer R.J."/>
            <person name="Retzlaff M."/>
            <person name="Goerlich K."/>
            <person name="Sander K."/>
            <person name="Tautz D."/>
        </authorList>
    </citation>
    <scope>NUCLEOTIDE SEQUENCE [GENOMIC DNA]</scope>
</reference>
<evidence type="ECO:0000255" key="1">
    <source>
        <dbReference type="PROSITE-ProRule" id="PRU00042"/>
    </source>
</evidence>
<evidence type="ECO:0000305" key="2"/>
<protein>
    <recommendedName>
        <fullName>Protein hunchback</fullName>
    </recommendedName>
</protein>
<feature type="chain" id="PRO_0000046979" description="Protein hunchback">
    <location>
        <begin position="1" status="less than"/>
        <end position="50" status="greater than"/>
    </location>
</feature>
<feature type="zinc finger region" description="C2H2-type 1" evidence="1">
    <location>
        <begin position="1" status="less than"/>
        <end position="5"/>
    </location>
</feature>
<feature type="zinc finger region" description="C2H2-type 2" evidence="1">
    <location>
        <begin position="11"/>
        <end position="33"/>
    </location>
</feature>
<feature type="zinc finger region" description="C2H2-type 3" evidence="1">
    <location>
        <begin position="39"/>
        <end position="50" status="greater than"/>
    </location>
</feature>
<feature type="non-terminal residue">
    <location>
        <position position="1"/>
    </location>
</feature>
<feature type="non-terminal residue">
    <location>
        <position position="50"/>
    </location>
</feature>
<accession>Q01789</accession>